<feature type="chain" id="PRO_1000065339" description="Adapter protein MecA">
    <location>
        <begin position="1"/>
        <end position="228"/>
    </location>
</feature>
<evidence type="ECO:0000255" key="1">
    <source>
        <dbReference type="HAMAP-Rule" id="MF_01124"/>
    </source>
</evidence>
<accession>Q037W6</accession>
<organism>
    <name type="scientific">Lacticaseibacillus paracasei (strain ATCC 334 / BCRC 17002 / CCUG 31169 / CIP 107868 / KCTC 3260 / NRRL B-441)</name>
    <name type="common">Lactobacillus paracasei</name>
    <dbReference type="NCBI Taxonomy" id="321967"/>
    <lineage>
        <taxon>Bacteria</taxon>
        <taxon>Bacillati</taxon>
        <taxon>Bacillota</taxon>
        <taxon>Bacilli</taxon>
        <taxon>Lactobacillales</taxon>
        <taxon>Lactobacillaceae</taxon>
        <taxon>Lacticaseibacillus</taxon>
    </lineage>
</organism>
<reference key="1">
    <citation type="journal article" date="2006" name="Proc. Natl. Acad. Sci. U.S.A.">
        <title>Comparative genomics of the lactic acid bacteria.</title>
        <authorList>
            <person name="Makarova K.S."/>
            <person name="Slesarev A."/>
            <person name="Wolf Y.I."/>
            <person name="Sorokin A."/>
            <person name="Mirkin B."/>
            <person name="Koonin E.V."/>
            <person name="Pavlov A."/>
            <person name="Pavlova N."/>
            <person name="Karamychev V."/>
            <person name="Polouchine N."/>
            <person name="Shakhova V."/>
            <person name="Grigoriev I."/>
            <person name="Lou Y."/>
            <person name="Rohksar D."/>
            <person name="Lucas S."/>
            <person name="Huang K."/>
            <person name="Goodstein D.M."/>
            <person name="Hawkins T."/>
            <person name="Plengvidhya V."/>
            <person name="Welker D."/>
            <person name="Hughes J."/>
            <person name="Goh Y."/>
            <person name="Benson A."/>
            <person name="Baldwin K."/>
            <person name="Lee J.-H."/>
            <person name="Diaz-Muniz I."/>
            <person name="Dosti B."/>
            <person name="Smeianov V."/>
            <person name="Wechter W."/>
            <person name="Barabote R."/>
            <person name="Lorca G."/>
            <person name="Altermann E."/>
            <person name="Barrangou R."/>
            <person name="Ganesan B."/>
            <person name="Xie Y."/>
            <person name="Rawsthorne H."/>
            <person name="Tamir D."/>
            <person name="Parker C."/>
            <person name="Breidt F."/>
            <person name="Broadbent J.R."/>
            <person name="Hutkins R."/>
            <person name="O'Sullivan D."/>
            <person name="Steele J."/>
            <person name="Unlu G."/>
            <person name="Saier M.H. Jr."/>
            <person name="Klaenhammer T."/>
            <person name="Richardson P."/>
            <person name="Kozyavkin S."/>
            <person name="Weimer B.C."/>
            <person name="Mills D.A."/>
        </authorList>
    </citation>
    <scope>NUCLEOTIDE SEQUENCE [LARGE SCALE GENOMIC DNA]</scope>
    <source>
        <strain>ATCC 334 / BCRC 17002 / CCUG 31169 / CIP 107868 / KCTC 3260 / NRRL B-441</strain>
    </source>
</reference>
<name>MECA_LACP3</name>
<comment type="function">
    <text evidence="1">Enables the recognition and targeting of unfolded and aggregated proteins to the ClpC protease or to other proteins involved in proteolysis.</text>
</comment>
<comment type="subunit">
    <text evidence="1">Homodimer.</text>
</comment>
<comment type="domain">
    <text>The N-terminal domain probably binds unfolded/aggregated proteins; the C-terminal domain interacts with ClpC.</text>
</comment>
<comment type="similarity">
    <text evidence="1">Belongs to the MecA family.</text>
</comment>
<keyword id="KW-1185">Reference proteome</keyword>
<gene>
    <name evidence="1" type="primary">mecA</name>
    <name type="ordered locus">LSEI_1734</name>
</gene>
<protein>
    <recommendedName>
        <fullName evidence="1">Adapter protein MecA</fullName>
    </recommendedName>
</protein>
<proteinExistence type="inferred from homology"/>
<dbReference type="EMBL" id="CP000423">
    <property type="protein sequence ID" value="ABJ70506.1"/>
    <property type="molecule type" value="Genomic_DNA"/>
</dbReference>
<dbReference type="RefSeq" id="WP_003579619.1">
    <property type="nucleotide sequence ID" value="NC_008526.1"/>
</dbReference>
<dbReference type="RefSeq" id="YP_806948.1">
    <property type="nucleotide sequence ID" value="NC_008526.1"/>
</dbReference>
<dbReference type="SMR" id="Q037W6"/>
<dbReference type="STRING" id="321967.LSEI_1734"/>
<dbReference type="PaxDb" id="321967-LSEI_1734"/>
<dbReference type="KEGG" id="lca:LSEI_1734"/>
<dbReference type="PATRIC" id="fig|321967.11.peg.1713"/>
<dbReference type="HOGENOM" id="CLU_071496_2_0_9"/>
<dbReference type="Proteomes" id="UP000001651">
    <property type="component" value="Chromosome"/>
</dbReference>
<dbReference type="GO" id="GO:0030674">
    <property type="term" value="F:protein-macromolecule adaptor activity"/>
    <property type="evidence" value="ECO:0007669"/>
    <property type="project" value="UniProtKB-UniRule"/>
</dbReference>
<dbReference type="Gene3D" id="3.30.70.1950">
    <property type="match status" value="1"/>
</dbReference>
<dbReference type="HAMAP" id="MF_01124">
    <property type="entry name" value="MecA"/>
    <property type="match status" value="1"/>
</dbReference>
<dbReference type="InterPro" id="IPR038471">
    <property type="entry name" value="MecA_C_sf"/>
</dbReference>
<dbReference type="InterPro" id="IPR008681">
    <property type="entry name" value="Neg-reg_MecA"/>
</dbReference>
<dbReference type="PANTHER" id="PTHR39161">
    <property type="entry name" value="ADAPTER PROTEIN MECA"/>
    <property type="match status" value="1"/>
</dbReference>
<dbReference type="PANTHER" id="PTHR39161:SF1">
    <property type="entry name" value="ADAPTER PROTEIN MECA 1"/>
    <property type="match status" value="1"/>
</dbReference>
<dbReference type="Pfam" id="PF05389">
    <property type="entry name" value="MecA"/>
    <property type="match status" value="1"/>
</dbReference>
<dbReference type="PIRSF" id="PIRSF029008">
    <property type="entry name" value="MecA"/>
    <property type="match status" value="1"/>
</dbReference>
<sequence>MEMERINANTIRVMLGNDDLAQRGITVLDLLGNHKQIESFFYSILDEVDKDHTFATNEAVTFQVMPSQSGLELLISKSGQKNDDSAADQTDDEGTDTQVPDYIRQQLQGLDASDQQDHQAVDEGGYIDADKAPQTELVLKLKDFEDFISLADTLRLEGGKSDLYRYKNAYYLVLTFYPNEISSDEAHDQMAVAMEFGDRSPLSSAVLSEYGKRLMETSALETARYYFK</sequence>